<comment type="function">
    <text evidence="6 7 10 12">Ligand for the sex peptide receptor (SPR) (PubMed:20308537, PubMed:20458515, PubMed:25333796). Stabilizes sleep and maintains sleep homeostasis to inhibit the activity of wake-promoting circuits, such as those that involve the pigment dispersing factor (pdf) neurons. Regulated by the circadian clock network and pathways associated with a sleep homeostat (PubMed:25333796). May also have a regulatory role in gut motility (PubMed:11181081).</text>
</comment>
<comment type="subcellular location">
    <subcellularLocation>
        <location>Secreted</location>
    </subcellularLocation>
</comment>
<comment type="tissue specificity">
    <text evidence="3 5 8">In larvae, strongly expressed in the midgut region before and in between the copper cells, and in a group of cells in the posterior part of the larval midgut (PubMed:11181081, PubMed:19319573). Expressed in the neurons of many areas including the subesophageal ganglion/tritocerebrum (SOG), olfactory glomeruli, lateral ventral protocerebrum, mushroom body, the optic lobe medulla and in the antennal lobes (PubMed:11181081, PubMed:20308537, PubMed:21174124).</text>
</comment>
<comment type="developmental stage">
    <text evidence="3 7">Expressed throughout development, with higher expression in larvae than in embryos (at protein level) (PubMed:11181081). Higher expression in males than females, with strongest expression at the third instar larval stage (PubMed:20458515).</text>
</comment>
<comment type="induction">
    <text evidence="10">Up-regulated by sleep deprivation.</text>
</comment>
<comment type="mass spectrometry">
    <molecule>Drostatin-B2</molecule>
</comment>
<comment type="mass spectrometry">
    <molecule>Drostatin-B3</molecule>
</comment>
<comment type="mass spectrometry">
    <molecule>Drostatin-B4</molecule>
</comment>
<comment type="mass spectrometry">
    <molecule>Drostatin-B5</molecule>
</comment>
<comment type="disruption phenotype">
    <text evidence="10">In both sexes RNA-mediated knockdown results in decreased day- and night-time sleep due to reduced sleep-bout duration. The number of sleep-bouts is not affected.</text>
</comment>
<comment type="miscellaneous">
    <text evidence="13">All five Drostatin-B peptides activate SPR with comparable efficiency, however Drostatin-B4 is a slightly more potent ligand.</text>
</comment>
<keyword id="KW-0027">Amidation</keyword>
<keyword id="KW-0165">Cleavage on pair of basic residues</keyword>
<keyword id="KW-0903">Direct protein sequencing</keyword>
<keyword id="KW-0527">Neuropeptide</keyword>
<keyword id="KW-1185">Reference proteome</keyword>
<keyword id="KW-0964">Secreted</keyword>
<keyword id="KW-0732">Signal</keyword>
<sequence>MAHTKTRRTYGFLMVLLILGSACGNLVASGSAGSPPSNEPGGGGLSEQVVLDQLSESDLYGNNKRAWQSLQSSWGKRSSSGDVSDPDIYMTGHFVPLVITDGTNTIDWDTFERLASGQSAQQQQQQPLQQQSQSGEDFDDLAGEPDVEKRAWKSMNVAWGKRRQAQGWNKFRGAWGKREPTWNNLKGMWGKRDQWQKLHGGWGKRSQLPSN</sequence>
<evidence type="ECO:0000255" key="1"/>
<evidence type="ECO:0000256" key="2">
    <source>
        <dbReference type="SAM" id="MobiDB-lite"/>
    </source>
</evidence>
<evidence type="ECO:0000269" key="3">
    <source>
    </source>
</evidence>
<evidence type="ECO:0000269" key="4">
    <source>
    </source>
</evidence>
<evidence type="ECO:0000269" key="5">
    <source>
    </source>
</evidence>
<evidence type="ECO:0000269" key="6">
    <source>
    </source>
</evidence>
<evidence type="ECO:0000269" key="7">
    <source>
    </source>
</evidence>
<evidence type="ECO:0000269" key="8">
    <source>
    </source>
</evidence>
<evidence type="ECO:0000269" key="9">
    <source>
    </source>
</evidence>
<evidence type="ECO:0000269" key="10">
    <source>
    </source>
</evidence>
<evidence type="ECO:0000303" key="11">
    <source>
    </source>
</evidence>
<evidence type="ECO:0000305" key="12">
    <source>
    </source>
</evidence>
<evidence type="ECO:0000305" key="13">
    <source>
    </source>
</evidence>
<accession>Q9VVF7</accession>
<organism>
    <name type="scientific">Drosophila melanogaster</name>
    <name type="common">Fruit fly</name>
    <dbReference type="NCBI Taxonomy" id="7227"/>
    <lineage>
        <taxon>Eukaryota</taxon>
        <taxon>Metazoa</taxon>
        <taxon>Ecdysozoa</taxon>
        <taxon>Arthropoda</taxon>
        <taxon>Hexapoda</taxon>
        <taxon>Insecta</taxon>
        <taxon>Pterygota</taxon>
        <taxon>Neoptera</taxon>
        <taxon>Endopterygota</taxon>
        <taxon>Diptera</taxon>
        <taxon>Brachycera</taxon>
        <taxon>Muscomorpha</taxon>
        <taxon>Ephydroidea</taxon>
        <taxon>Drosophilidae</taxon>
        <taxon>Drosophila</taxon>
        <taxon>Sophophora</taxon>
    </lineage>
</organism>
<dbReference type="EMBL" id="AF312379">
    <property type="protein sequence ID" value="AAK29381.1"/>
    <property type="molecule type" value="mRNA"/>
</dbReference>
<dbReference type="EMBL" id="AJ291725">
    <property type="protein sequence ID" value="CAC17604.1"/>
    <property type="molecule type" value="mRNA"/>
</dbReference>
<dbReference type="EMBL" id="AE014296">
    <property type="protein sequence ID" value="AAF49354.1"/>
    <property type="molecule type" value="Genomic_DNA"/>
</dbReference>
<dbReference type="EMBL" id="AY118306">
    <property type="protein sequence ID" value="AAM48335.1"/>
    <property type="molecule type" value="mRNA"/>
</dbReference>
<dbReference type="PIR" id="JC7617">
    <property type="entry name" value="JC7617"/>
</dbReference>
<dbReference type="RefSeq" id="NP_648971.1">
    <property type="nucleotide sequence ID" value="NM_140714.4"/>
</dbReference>
<dbReference type="BioGRID" id="65223">
    <property type="interactions" value="2"/>
</dbReference>
<dbReference type="FunCoup" id="Q9VVF7">
    <property type="interactions" value="64"/>
</dbReference>
<dbReference type="IntAct" id="Q9VVF7">
    <property type="interactions" value="1"/>
</dbReference>
<dbReference type="STRING" id="7227.FBpp0075003"/>
<dbReference type="PaxDb" id="7227-FBpp0075003"/>
<dbReference type="DNASU" id="39933"/>
<dbReference type="EnsemblMetazoa" id="FBtr0075241">
    <property type="protein sequence ID" value="FBpp0075003"/>
    <property type="gene ID" value="FBgn0036713"/>
</dbReference>
<dbReference type="GeneID" id="39933"/>
<dbReference type="KEGG" id="dme:Dmel_CG6456"/>
<dbReference type="AGR" id="FB:FBgn0036713"/>
<dbReference type="CTD" id="4284"/>
<dbReference type="FlyBase" id="FBgn0036713">
    <property type="gene designation" value="Mip"/>
</dbReference>
<dbReference type="VEuPathDB" id="VectorBase:FBgn0036713"/>
<dbReference type="eggNOG" id="ENOG502SDZD">
    <property type="taxonomic scope" value="Eukaryota"/>
</dbReference>
<dbReference type="GeneTree" id="ENSGT00940000176783"/>
<dbReference type="HOGENOM" id="CLU_1306026_0_0_1"/>
<dbReference type="InParanoid" id="Q9VVF7"/>
<dbReference type="OMA" id="NIYMTGH"/>
<dbReference type="OrthoDB" id="6090360at2759"/>
<dbReference type="PhylomeDB" id="Q9VVF7"/>
<dbReference type="BioGRID-ORCS" id="39933">
    <property type="hits" value="0 hits in 1 CRISPR screen"/>
</dbReference>
<dbReference type="GenomeRNAi" id="39933"/>
<dbReference type="PRO" id="PR:Q9VVF7"/>
<dbReference type="Proteomes" id="UP000000803">
    <property type="component" value="Chromosome 3L"/>
</dbReference>
<dbReference type="Bgee" id="FBgn0036713">
    <property type="expression patterns" value="Expressed in adult middle midgut class II enteroendocrine cell in adult midgut (Drosophila) and 57 other cell types or tissues"/>
</dbReference>
<dbReference type="GO" id="GO:0005615">
    <property type="term" value="C:extracellular space"/>
    <property type="evidence" value="ECO:0000314"/>
    <property type="project" value="FlyBase"/>
</dbReference>
<dbReference type="GO" id="GO:0001664">
    <property type="term" value="F:G protein-coupled receptor binding"/>
    <property type="evidence" value="ECO:0000353"/>
    <property type="project" value="FlyBase"/>
</dbReference>
<dbReference type="GO" id="GO:0005184">
    <property type="term" value="F:neuropeptide hormone activity"/>
    <property type="evidence" value="ECO:0000303"/>
    <property type="project" value="FlyBase"/>
</dbReference>
<dbReference type="GO" id="GO:0005102">
    <property type="term" value="F:signaling receptor binding"/>
    <property type="evidence" value="ECO:0000314"/>
    <property type="project" value="UniProtKB"/>
</dbReference>
<dbReference type="GO" id="GO:0007186">
    <property type="term" value="P:G protein-coupled receptor signaling pathway"/>
    <property type="evidence" value="ECO:0000314"/>
    <property type="project" value="FlyBase"/>
</dbReference>
<dbReference type="GO" id="GO:1903999">
    <property type="term" value="P:negative regulation of eating behavior"/>
    <property type="evidence" value="ECO:0000315"/>
    <property type="project" value="FlyBase"/>
</dbReference>
<dbReference type="GO" id="GO:0045968">
    <property type="term" value="P:negative regulation of juvenile hormone biosynthetic process"/>
    <property type="evidence" value="ECO:0000303"/>
    <property type="project" value="UniProtKB"/>
</dbReference>
<dbReference type="GO" id="GO:0007218">
    <property type="term" value="P:neuropeptide signaling pathway"/>
    <property type="evidence" value="ECO:0000314"/>
    <property type="project" value="UniProtKB"/>
</dbReference>
<reference key="1">
    <citation type="journal article" date="2001" name="Biochem. Biophys. Res. Commun.">
        <title>Molecular cloning, genomic organization, and expression of a B-type (cricket-type) allatostatin preprohormone from Drosophila melanogaster.</title>
        <authorList>
            <person name="Williamson M."/>
            <person name="Lenz C."/>
            <person name="Winther M.E."/>
            <person name="Naessel D.R."/>
            <person name="Grimmelikhuijzen C.J.P."/>
        </authorList>
    </citation>
    <scope>NUCLEOTIDE SEQUENCE [MRNA]</scope>
    <scope>FUNCTION</scope>
    <scope>TISSUE SPECIFICITY</scope>
    <scope>DEVELOPMENTAL STAGE</scope>
    <source>
        <strain>Canton-S</strain>
    </source>
</reference>
<reference key="2">
    <citation type="book" date="2000" name="Reproductive biology of invertebrates. Vol. X - part B. Progress in developmental endocrinology">
        <title>Evolution of developmental peptide hormones and their receptors.</title>
        <editorList>
            <person name="Adiyodi K.G."/>
            <person name="Adiyodi R.G."/>
            <person name="Dorn A."/>
        </editorList>
        <authorList>
            <person name="Vanden Broeck J."/>
            <person name="Schoofs L."/>
            <person name="De Loof A."/>
        </authorList>
    </citation>
    <scope>NUCLEOTIDE SEQUENCE [MRNA]</scope>
</reference>
<reference key="3">
    <citation type="journal article" date="2000" name="Science">
        <title>The genome sequence of Drosophila melanogaster.</title>
        <authorList>
            <person name="Adams M.D."/>
            <person name="Celniker S.E."/>
            <person name="Holt R.A."/>
            <person name="Evans C.A."/>
            <person name="Gocayne J.D."/>
            <person name="Amanatides P.G."/>
            <person name="Scherer S.E."/>
            <person name="Li P.W."/>
            <person name="Hoskins R.A."/>
            <person name="Galle R.F."/>
            <person name="George R.A."/>
            <person name="Lewis S.E."/>
            <person name="Richards S."/>
            <person name="Ashburner M."/>
            <person name="Henderson S.N."/>
            <person name="Sutton G.G."/>
            <person name="Wortman J.R."/>
            <person name="Yandell M.D."/>
            <person name="Zhang Q."/>
            <person name="Chen L.X."/>
            <person name="Brandon R.C."/>
            <person name="Rogers Y.-H.C."/>
            <person name="Blazej R.G."/>
            <person name="Champe M."/>
            <person name="Pfeiffer B.D."/>
            <person name="Wan K.H."/>
            <person name="Doyle C."/>
            <person name="Baxter E.G."/>
            <person name="Helt G."/>
            <person name="Nelson C.R."/>
            <person name="Miklos G.L.G."/>
            <person name="Abril J.F."/>
            <person name="Agbayani A."/>
            <person name="An H.-J."/>
            <person name="Andrews-Pfannkoch C."/>
            <person name="Baldwin D."/>
            <person name="Ballew R.M."/>
            <person name="Basu A."/>
            <person name="Baxendale J."/>
            <person name="Bayraktaroglu L."/>
            <person name="Beasley E.M."/>
            <person name="Beeson K.Y."/>
            <person name="Benos P.V."/>
            <person name="Berman B.P."/>
            <person name="Bhandari D."/>
            <person name="Bolshakov S."/>
            <person name="Borkova D."/>
            <person name="Botchan M.R."/>
            <person name="Bouck J."/>
            <person name="Brokstein P."/>
            <person name="Brottier P."/>
            <person name="Burtis K.C."/>
            <person name="Busam D.A."/>
            <person name="Butler H."/>
            <person name="Cadieu E."/>
            <person name="Center A."/>
            <person name="Chandra I."/>
            <person name="Cherry J.M."/>
            <person name="Cawley S."/>
            <person name="Dahlke C."/>
            <person name="Davenport L.B."/>
            <person name="Davies P."/>
            <person name="de Pablos B."/>
            <person name="Delcher A."/>
            <person name="Deng Z."/>
            <person name="Mays A.D."/>
            <person name="Dew I."/>
            <person name="Dietz S.M."/>
            <person name="Dodson K."/>
            <person name="Doup L.E."/>
            <person name="Downes M."/>
            <person name="Dugan-Rocha S."/>
            <person name="Dunkov B.C."/>
            <person name="Dunn P."/>
            <person name="Durbin K.J."/>
            <person name="Evangelista C.C."/>
            <person name="Ferraz C."/>
            <person name="Ferriera S."/>
            <person name="Fleischmann W."/>
            <person name="Fosler C."/>
            <person name="Gabrielian A.E."/>
            <person name="Garg N.S."/>
            <person name="Gelbart W.M."/>
            <person name="Glasser K."/>
            <person name="Glodek A."/>
            <person name="Gong F."/>
            <person name="Gorrell J.H."/>
            <person name="Gu Z."/>
            <person name="Guan P."/>
            <person name="Harris M."/>
            <person name="Harris N.L."/>
            <person name="Harvey D.A."/>
            <person name="Heiman T.J."/>
            <person name="Hernandez J.R."/>
            <person name="Houck J."/>
            <person name="Hostin D."/>
            <person name="Houston K.A."/>
            <person name="Howland T.J."/>
            <person name="Wei M.-H."/>
            <person name="Ibegwam C."/>
            <person name="Jalali M."/>
            <person name="Kalush F."/>
            <person name="Karpen G.H."/>
            <person name="Ke Z."/>
            <person name="Kennison J.A."/>
            <person name="Ketchum K.A."/>
            <person name="Kimmel B.E."/>
            <person name="Kodira C.D."/>
            <person name="Kraft C.L."/>
            <person name="Kravitz S."/>
            <person name="Kulp D."/>
            <person name="Lai Z."/>
            <person name="Lasko P."/>
            <person name="Lei Y."/>
            <person name="Levitsky A.A."/>
            <person name="Li J.H."/>
            <person name="Li Z."/>
            <person name="Liang Y."/>
            <person name="Lin X."/>
            <person name="Liu X."/>
            <person name="Mattei B."/>
            <person name="McIntosh T.C."/>
            <person name="McLeod M.P."/>
            <person name="McPherson D."/>
            <person name="Merkulov G."/>
            <person name="Milshina N.V."/>
            <person name="Mobarry C."/>
            <person name="Morris J."/>
            <person name="Moshrefi A."/>
            <person name="Mount S.M."/>
            <person name="Moy M."/>
            <person name="Murphy B."/>
            <person name="Murphy L."/>
            <person name="Muzny D.M."/>
            <person name="Nelson D.L."/>
            <person name="Nelson D.R."/>
            <person name="Nelson K.A."/>
            <person name="Nixon K."/>
            <person name="Nusskern D.R."/>
            <person name="Pacleb J.M."/>
            <person name="Palazzolo M."/>
            <person name="Pittman G.S."/>
            <person name="Pan S."/>
            <person name="Pollard J."/>
            <person name="Puri V."/>
            <person name="Reese M.G."/>
            <person name="Reinert K."/>
            <person name="Remington K."/>
            <person name="Saunders R.D.C."/>
            <person name="Scheeler F."/>
            <person name="Shen H."/>
            <person name="Shue B.C."/>
            <person name="Siden-Kiamos I."/>
            <person name="Simpson M."/>
            <person name="Skupski M.P."/>
            <person name="Smith T.J."/>
            <person name="Spier E."/>
            <person name="Spradling A.C."/>
            <person name="Stapleton M."/>
            <person name="Strong R."/>
            <person name="Sun E."/>
            <person name="Svirskas R."/>
            <person name="Tector C."/>
            <person name="Turner R."/>
            <person name="Venter E."/>
            <person name="Wang A.H."/>
            <person name="Wang X."/>
            <person name="Wang Z.-Y."/>
            <person name="Wassarman D.A."/>
            <person name="Weinstock G.M."/>
            <person name="Weissenbach J."/>
            <person name="Williams S.M."/>
            <person name="Woodage T."/>
            <person name="Worley K.C."/>
            <person name="Wu D."/>
            <person name="Yang S."/>
            <person name="Yao Q.A."/>
            <person name="Ye J."/>
            <person name="Yeh R.-F."/>
            <person name="Zaveri J.S."/>
            <person name="Zhan M."/>
            <person name="Zhang G."/>
            <person name="Zhao Q."/>
            <person name="Zheng L."/>
            <person name="Zheng X.H."/>
            <person name="Zhong F.N."/>
            <person name="Zhong W."/>
            <person name="Zhou X."/>
            <person name="Zhu S.C."/>
            <person name="Zhu X."/>
            <person name="Smith H.O."/>
            <person name="Gibbs R.A."/>
            <person name="Myers E.W."/>
            <person name="Rubin G.M."/>
            <person name="Venter J.C."/>
        </authorList>
    </citation>
    <scope>NUCLEOTIDE SEQUENCE [LARGE SCALE GENOMIC DNA]</scope>
    <source>
        <strain>Berkeley</strain>
    </source>
</reference>
<reference key="4">
    <citation type="journal article" date="2002" name="Genome Biol.">
        <title>Annotation of the Drosophila melanogaster euchromatic genome: a systematic review.</title>
        <authorList>
            <person name="Misra S."/>
            <person name="Crosby M.A."/>
            <person name="Mungall C.J."/>
            <person name="Matthews B.B."/>
            <person name="Campbell K.S."/>
            <person name="Hradecky P."/>
            <person name="Huang Y."/>
            <person name="Kaminker J.S."/>
            <person name="Millburn G.H."/>
            <person name="Prochnik S.E."/>
            <person name="Smith C.D."/>
            <person name="Tupy J.L."/>
            <person name="Whitfield E.J."/>
            <person name="Bayraktaroglu L."/>
            <person name="Berman B.P."/>
            <person name="Bettencourt B.R."/>
            <person name="Celniker S.E."/>
            <person name="de Grey A.D.N.J."/>
            <person name="Drysdale R.A."/>
            <person name="Harris N.L."/>
            <person name="Richter J."/>
            <person name="Russo S."/>
            <person name="Schroeder A.J."/>
            <person name="Shu S.Q."/>
            <person name="Stapleton M."/>
            <person name="Yamada C."/>
            <person name="Ashburner M."/>
            <person name="Gelbart W.M."/>
            <person name="Rubin G.M."/>
            <person name="Lewis S.E."/>
        </authorList>
    </citation>
    <scope>GENOME REANNOTATION</scope>
    <source>
        <strain>Berkeley</strain>
    </source>
</reference>
<reference key="5">
    <citation type="submission" date="2002-06" db="EMBL/GenBank/DDBJ databases">
        <authorList>
            <person name="Stapleton M."/>
            <person name="Brokstein P."/>
            <person name="Hong L."/>
            <person name="Agbayani A."/>
            <person name="Carlson J.W."/>
            <person name="Champe M."/>
            <person name="Chavez C."/>
            <person name="Dorsett V."/>
            <person name="Dresnek D."/>
            <person name="Farfan D."/>
            <person name="Frise E."/>
            <person name="George R.A."/>
            <person name="Gonzalez M."/>
            <person name="Guarin H."/>
            <person name="Kronmiller B."/>
            <person name="Li P.W."/>
            <person name="Liao G."/>
            <person name="Miranda A."/>
            <person name="Mungall C.J."/>
            <person name="Nunoo J."/>
            <person name="Pacleb J.M."/>
            <person name="Paragas V."/>
            <person name="Park S."/>
            <person name="Patel S."/>
            <person name="Phouanenavong S."/>
            <person name="Wan K.H."/>
            <person name="Yu C."/>
            <person name="Lewis S.E."/>
            <person name="Rubin G.M."/>
            <person name="Celniker S.E."/>
        </authorList>
    </citation>
    <scope>NUCLEOTIDE SEQUENCE [LARGE SCALE MRNA]</scope>
    <source>
        <strain>Berkeley</strain>
        <tissue>Head</tissue>
    </source>
</reference>
<reference key="6">
    <citation type="journal article" date="2002" name="J. Biol. Chem.">
        <title>Peptidomics of the larval Drosophila melanogaster central nervous system.</title>
        <authorList>
            <person name="Baggerman G."/>
            <person name="Cerstiaens A."/>
            <person name="De Loof A."/>
            <person name="Schoofs L."/>
        </authorList>
    </citation>
    <scope>PROTEIN SEQUENCE OF 151-159 AND 193-202</scope>
    <scope>AMIDATION</scope>
    <source>
        <tissue>Larva</tissue>
    </source>
</reference>
<reference key="7">
    <citation type="journal article" date="2011" name="J. Proteome Res.">
        <title>Peptidomics and peptide hormone processing in the Drosophila midgut.</title>
        <authorList>
            <person name="Reiher W."/>
            <person name="Shirras C."/>
            <person name="Kahnt J."/>
            <person name="Baumeister S."/>
            <person name="Isaac R.E."/>
            <person name="Wegener C."/>
        </authorList>
    </citation>
    <scope>PROTEIN SEQUENCE OF 151-159; 163-175; 179-189 AND 193-202</scope>
    <scope>IDENTIFICATION BY MASS SPECTROMETRY</scope>
    <scope>MASS SPECTROMETRY</scope>
    <scope>AMIDATION AT TRP-159; TRP-175; TRP-189 AND TRP-202</scope>
    <source>
        <tissue evidence="11">Midgut</tissue>
    </source>
</reference>
<reference key="8">
    <citation type="journal article" date="2009" name="Cell Tissue Res.">
        <title>Peptidergic paracrine and endocrine cells in the midgut of the fruit fly maggot.</title>
        <authorList>
            <person name="Veenstra J.A."/>
        </authorList>
    </citation>
    <scope>TISSUE SPECIFICITY</scope>
</reference>
<reference key="9">
    <citation type="journal article" date="2010" name="Cell. Mol. Life Sci.">
        <title>Myoinhibiting peptides are the ancestral ligands of the promiscuous Drosophila sex peptide receptor.</title>
        <authorList>
            <person name="Poels J."/>
            <person name="Van Loy T."/>
            <person name="Vandersmissen H.P."/>
            <person name="Van Hiel B."/>
            <person name="Van Soest S."/>
            <person name="Nachman R.J."/>
            <person name="Vanden Broeck J."/>
        </authorList>
    </citation>
    <scope>FUNCTION</scope>
    <scope>DEVELOPMENTAL STAGE</scope>
    <scope>MUTAGENESIS OF TRP-195 AND TRP-202</scope>
</reference>
<reference key="10">
    <citation type="journal article" date="2010" name="Proc. Natl. Acad. Sci. U.S.A.">
        <title>MIPs are ancestral ligands for the sex peptide receptor.</title>
        <authorList>
            <person name="Kim Y.J."/>
            <person name="Bartalska K."/>
            <person name="Audsley N."/>
            <person name="Yamanaka N."/>
            <person name="Yapici N."/>
            <person name="Lee J.Y."/>
            <person name="Kim Y.C."/>
            <person name="Markovic M."/>
            <person name="Isaac E."/>
            <person name="Tanaka Y."/>
            <person name="Dickson B.J."/>
        </authorList>
    </citation>
    <scope>FUNCTION</scope>
    <scope>TISSUE SPECIFICITY</scope>
    <scope>MUTAGENESIS OF TRP-67 AND TRP-74</scope>
    <scope>SYNTHESIS OF 66-74</scope>
</reference>
<reference key="11">
    <citation type="journal article" date="2011" name="Cell Tissue Res.">
        <title>A novel wide-field neuron with branches in the lamina of the Drosophila visual system expresses myoinhibitory peptide and may be associated with the clock.</title>
        <authorList>
            <person name="Kolodziejczyk A."/>
            <person name="Nassel D.R."/>
        </authorList>
    </citation>
    <scope>TISSUE SPECIFICITY</scope>
</reference>
<reference key="12">
    <citation type="journal article" date="2014" name="PLoS Biol.">
        <title>A homeostatic sleep-stabilizing pathway in Drosophila composed of the sex peptide receptor and its ligand, the myoinhibitory peptide.</title>
        <authorList>
            <person name="Oh Y."/>
            <person name="Yoon S.E."/>
            <person name="Zhang Q."/>
            <person name="Chae H.S."/>
            <person name="Daubnerova I."/>
            <person name="Shafer O.T."/>
            <person name="Choe J."/>
            <person name="Kim Y.J."/>
        </authorList>
    </citation>
    <scope>FUNCTION</scope>
    <scope>INDUCTION</scope>
    <scope>DISRUPTION PHENOTYPE</scope>
</reference>
<name>MIP_DROME</name>
<feature type="signal peptide" evidence="1">
    <location>
        <begin position="1"/>
        <end position="24"/>
    </location>
</feature>
<feature type="propeptide" id="PRO_0000001156">
    <location>
        <begin position="25"/>
        <end position="63"/>
    </location>
</feature>
<feature type="peptide" id="PRO_0000001157" description="Drostatin-B1" evidence="1">
    <location>
        <begin position="66"/>
        <end position="74"/>
    </location>
</feature>
<feature type="propeptide" id="PRO_0000001158">
    <location>
        <begin position="78"/>
        <end position="148"/>
    </location>
</feature>
<feature type="peptide" id="PRO_0000001159" description="Drostatin-B2" evidence="4 9">
    <location>
        <begin position="151"/>
        <end position="159"/>
    </location>
</feature>
<feature type="peptide" id="PRO_0000001160" description="Drostatin-B3" evidence="9">
    <location>
        <begin position="163"/>
        <end position="175"/>
    </location>
</feature>
<feature type="peptide" id="PRO_0000001161" description="Drostatin-B4" evidence="9">
    <location>
        <begin position="179"/>
        <end position="189"/>
    </location>
</feature>
<feature type="peptide" id="PRO_0000001162" description="Drostatin-B5" evidence="4 9">
    <location>
        <begin position="193"/>
        <end position="202"/>
    </location>
</feature>
<feature type="propeptide" id="PRO_0000001163">
    <location>
        <begin position="206"/>
        <end position="211"/>
    </location>
</feature>
<feature type="region of interest" description="Disordered" evidence="2">
    <location>
        <begin position="115"/>
        <end position="142"/>
    </location>
</feature>
<feature type="region of interest" description="Disordered" evidence="2">
    <location>
        <begin position="168"/>
        <end position="190"/>
    </location>
</feature>
<feature type="compositionally biased region" description="Low complexity" evidence="2">
    <location>
        <begin position="115"/>
        <end position="135"/>
    </location>
</feature>
<feature type="modified residue" description="Tryptophan amide" evidence="1">
    <location>
        <position position="74"/>
    </location>
</feature>
<feature type="modified residue" description="Tryptophan amide" evidence="4 9">
    <location>
        <position position="159"/>
    </location>
</feature>
<feature type="modified residue" description="Tryptophan amide" evidence="9">
    <location>
        <position position="175"/>
    </location>
</feature>
<feature type="modified residue" description="Tryptophan amide" evidence="9">
    <location>
        <position position="189"/>
    </location>
</feature>
<feature type="modified residue" description="Tryptophan amide" evidence="4 9">
    <location>
        <position position="202"/>
    </location>
</feature>
<feature type="mutagenesis site" description="Complete loss of activity; when associated with A-74." evidence="6">
    <original>W</original>
    <variation>A</variation>
    <location>
        <position position="67"/>
    </location>
</feature>
<feature type="mutagenesis site" description="Complete loss of activity; when associated with A-67." evidence="6">
    <original>W</original>
    <variation>A</variation>
    <location>
        <position position="74"/>
    </location>
</feature>
<feature type="mutagenesis site" description="Reduced activation of SPR; when associated with A-202." evidence="7">
    <original>W</original>
    <variation>A</variation>
    <location>
        <position position="195"/>
    </location>
</feature>
<feature type="mutagenesis site" description="Reduced activation of SPR." evidence="7">
    <original>W</original>
    <variation>A</variation>
    <location>
        <position position="202"/>
    </location>
</feature>
<proteinExistence type="evidence at protein level"/>
<protein>
    <recommendedName>
        <fullName>Allatostatins MIP</fullName>
    </recommendedName>
    <alternativeName>
        <fullName>B-type Allostatin preprohormone</fullName>
    </alternativeName>
    <alternativeName>
        <fullName>Myoinhibitory-like protein</fullName>
    </alternativeName>
    <component>
        <recommendedName>
            <fullName>Drostatin-B1</fullName>
        </recommendedName>
        <alternativeName>
            <fullName>MIP-1</fullName>
        </alternativeName>
    </component>
    <component>
        <recommendedName>
            <fullName>Drostatin-B2</fullName>
        </recommendedName>
        <alternativeName>
            <fullName>MIP-2</fullName>
        </alternativeName>
    </component>
    <component>
        <recommendedName>
            <fullName>Drostatin-B3</fullName>
        </recommendedName>
        <alternativeName>
            <fullName>MIP-3</fullName>
        </alternativeName>
    </component>
    <component>
        <recommendedName>
            <fullName>Drostatin-B4</fullName>
        </recommendedName>
        <alternativeName>
            <fullName>MIP-4</fullName>
        </alternativeName>
    </component>
    <component>
        <recommendedName>
            <fullName>Drostatin-B5</fullName>
        </recommendedName>
        <alternativeName>
            <fullName>MIP-5</fullName>
        </alternativeName>
    </component>
</protein>
<gene>
    <name type="primary">Mip</name>
    <name type="ORF">CG6456</name>
</gene>